<keyword id="KW-0028">Amino-acid biosynthesis</keyword>
<keyword id="KW-0067">ATP-binding</keyword>
<keyword id="KW-0963">Cytoplasm</keyword>
<keyword id="KW-0328">Glycosyltransferase</keyword>
<keyword id="KW-0368">Histidine biosynthesis</keyword>
<keyword id="KW-0460">Magnesium</keyword>
<keyword id="KW-0479">Metal-binding</keyword>
<keyword id="KW-0547">Nucleotide-binding</keyword>
<keyword id="KW-1185">Reference proteome</keyword>
<keyword id="KW-0808">Transferase</keyword>
<comment type="function">
    <text evidence="1">Catalyzes the condensation of ATP and 5-phosphoribose 1-diphosphate to form N'-(5'-phosphoribosyl)-ATP (PR-ATP). Has a crucial role in the pathway because the rate of histidine biosynthesis seems to be controlled primarily by regulation of HisG enzymatic activity (By similarity).</text>
</comment>
<comment type="catalytic activity">
    <reaction>
        <text>1-(5-phospho-beta-D-ribosyl)-ATP + diphosphate = 5-phospho-alpha-D-ribose 1-diphosphate + ATP</text>
        <dbReference type="Rhea" id="RHEA:18473"/>
        <dbReference type="ChEBI" id="CHEBI:30616"/>
        <dbReference type="ChEBI" id="CHEBI:33019"/>
        <dbReference type="ChEBI" id="CHEBI:58017"/>
        <dbReference type="ChEBI" id="CHEBI:73183"/>
        <dbReference type="EC" id="2.4.2.17"/>
    </reaction>
</comment>
<comment type="cofactor">
    <cofactor evidence="1">
        <name>Mg(2+)</name>
        <dbReference type="ChEBI" id="CHEBI:18420"/>
    </cofactor>
</comment>
<comment type="activity regulation">
    <text evidence="1">Feedback inhibited by histidine.</text>
</comment>
<comment type="pathway">
    <text>Amino-acid biosynthesis; L-histidine biosynthesis; L-histidine from 5-phospho-alpha-D-ribose 1-diphosphate: step 1/9.</text>
</comment>
<comment type="subcellular location">
    <subcellularLocation>
        <location evidence="1">Cytoplasm</location>
    </subcellularLocation>
</comment>
<comment type="similarity">
    <text evidence="2">Belongs to the ATP phosphoribosyltransferase family. Long subfamily.</text>
</comment>
<dbReference type="EC" id="2.4.2.17"/>
<dbReference type="EMBL" id="U82227">
    <property type="protein sequence ID" value="AAB63019.1"/>
    <property type="molecule type" value="Genomic_DNA"/>
</dbReference>
<dbReference type="EMBL" id="Y18930">
    <property type="protein sequence ID" value="CAB57707.1"/>
    <property type="molecule type" value="Genomic_DNA"/>
</dbReference>
<dbReference type="EMBL" id="AE006641">
    <property type="protein sequence ID" value="AAK40905.1"/>
    <property type="molecule type" value="Genomic_DNA"/>
</dbReference>
<dbReference type="PIR" id="B90206">
    <property type="entry name" value="B90206"/>
</dbReference>
<dbReference type="SMR" id="O33771"/>
<dbReference type="FunCoup" id="O33771">
    <property type="interactions" value="189"/>
</dbReference>
<dbReference type="STRING" id="273057.SSO0593"/>
<dbReference type="PaxDb" id="273057-SSO0593"/>
<dbReference type="EnsemblBacteria" id="AAK40905">
    <property type="protein sequence ID" value="AAK40905"/>
    <property type="gene ID" value="SSO0593"/>
</dbReference>
<dbReference type="KEGG" id="sso:SSO0593"/>
<dbReference type="PATRIC" id="fig|273057.12.peg.601"/>
<dbReference type="eggNOG" id="arCOG02208">
    <property type="taxonomic scope" value="Archaea"/>
</dbReference>
<dbReference type="HOGENOM" id="CLU_038115_1_1_2"/>
<dbReference type="InParanoid" id="O33771"/>
<dbReference type="PhylomeDB" id="O33771"/>
<dbReference type="UniPathway" id="UPA00031">
    <property type="reaction ID" value="UER00006"/>
</dbReference>
<dbReference type="Proteomes" id="UP000001974">
    <property type="component" value="Chromosome"/>
</dbReference>
<dbReference type="GO" id="GO:0005737">
    <property type="term" value="C:cytoplasm"/>
    <property type="evidence" value="ECO:0007669"/>
    <property type="project" value="UniProtKB-SubCell"/>
</dbReference>
<dbReference type="GO" id="GO:0005524">
    <property type="term" value="F:ATP binding"/>
    <property type="evidence" value="ECO:0007669"/>
    <property type="project" value="UniProtKB-KW"/>
</dbReference>
<dbReference type="GO" id="GO:0003879">
    <property type="term" value="F:ATP phosphoribosyltransferase activity"/>
    <property type="evidence" value="ECO:0000318"/>
    <property type="project" value="GO_Central"/>
</dbReference>
<dbReference type="GO" id="GO:0000287">
    <property type="term" value="F:magnesium ion binding"/>
    <property type="evidence" value="ECO:0007669"/>
    <property type="project" value="UniProtKB-UniRule"/>
</dbReference>
<dbReference type="GO" id="GO:0000105">
    <property type="term" value="P:L-histidine biosynthetic process"/>
    <property type="evidence" value="ECO:0000318"/>
    <property type="project" value="GO_Central"/>
</dbReference>
<dbReference type="CDD" id="cd13594">
    <property type="entry name" value="PBP2_HisGL4"/>
    <property type="match status" value="1"/>
</dbReference>
<dbReference type="FunFam" id="3.30.70.120:FF:000002">
    <property type="entry name" value="ATP phosphoribosyltransferase"/>
    <property type="match status" value="1"/>
</dbReference>
<dbReference type="Gene3D" id="3.30.70.120">
    <property type="match status" value="1"/>
</dbReference>
<dbReference type="Gene3D" id="3.40.190.10">
    <property type="entry name" value="Periplasmic binding protein-like II"/>
    <property type="match status" value="2"/>
</dbReference>
<dbReference type="HAMAP" id="MF_00079">
    <property type="entry name" value="HisG_Long"/>
    <property type="match status" value="1"/>
</dbReference>
<dbReference type="InterPro" id="IPR020621">
    <property type="entry name" value="ATP-PRT_HisG_long"/>
</dbReference>
<dbReference type="InterPro" id="IPR013820">
    <property type="entry name" value="ATP_PRibTrfase_cat"/>
</dbReference>
<dbReference type="InterPro" id="IPR018198">
    <property type="entry name" value="ATP_PRibTrfase_CS"/>
</dbReference>
<dbReference type="InterPro" id="IPR001348">
    <property type="entry name" value="ATP_PRibTrfase_HisG"/>
</dbReference>
<dbReference type="InterPro" id="IPR013115">
    <property type="entry name" value="HisG_C"/>
</dbReference>
<dbReference type="InterPro" id="IPR011322">
    <property type="entry name" value="N-reg_PII-like_a/b"/>
</dbReference>
<dbReference type="InterPro" id="IPR015867">
    <property type="entry name" value="N-reg_PII/ATP_PRibTrfase_C"/>
</dbReference>
<dbReference type="NCBIfam" id="TIGR00070">
    <property type="entry name" value="hisG"/>
    <property type="match status" value="1"/>
</dbReference>
<dbReference type="NCBIfam" id="TIGR03455">
    <property type="entry name" value="HisG_C-term"/>
    <property type="match status" value="1"/>
</dbReference>
<dbReference type="PANTHER" id="PTHR21403:SF10">
    <property type="entry name" value="ATP PHOSPHORIBOSYLTRANSFERASE"/>
    <property type="match status" value="1"/>
</dbReference>
<dbReference type="PANTHER" id="PTHR21403">
    <property type="entry name" value="ATP PHOSPHORIBOSYLTRANSFERASE ATP-PRTASE"/>
    <property type="match status" value="1"/>
</dbReference>
<dbReference type="Pfam" id="PF01634">
    <property type="entry name" value="HisG"/>
    <property type="match status" value="1"/>
</dbReference>
<dbReference type="Pfam" id="PF08029">
    <property type="entry name" value="HisG_C"/>
    <property type="match status" value="1"/>
</dbReference>
<dbReference type="SUPFAM" id="SSF54913">
    <property type="entry name" value="GlnB-like"/>
    <property type="match status" value="1"/>
</dbReference>
<dbReference type="SUPFAM" id="SSF53850">
    <property type="entry name" value="Periplasmic binding protein-like II"/>
    <property type="match status" value="1"/>
</dbReference>
<dbReference type="PROSITE" id="PS01316">
    <property type="entry name" value="ATP_P_PHORIBOSYLTR"/>
    <property type="match status" value="1"/>
</dbReference>
<sequence>MVRNLKIAIPNKGRLQQPTLQFLQSVGIKPLASDDRALIVPTSWEGVQLVMIRTEDIPNIVETGATELGITGHDYVIESSADVEELIKLDFGRSKIVLAVPQTWRENSVDELKGKEFRVATKYYNIAKEYVRRRELNAKVVKISGAAEVMPSLGAAEAIIDVMSTGTTLKLHGLKAIDVIMDSYAVVIGNRNWIKNDEADRINLLLTMMKGAIAAKGKKMIFMNVPDNKLDGVINSLPAMLAPAITRLSRSDIWEVITVAEEDILPEVIAKVKAAGARDIVVIDIEKVVK</sequence>
<feature type="chain" id="PRO_0000151889" description="ATP phosphoribosyltransferase">
    <location>
        <begin position="1"/>
        <end position="290"/>
    </location>
</feature>
<proteinExistence type="inferred from homology"/>
<evidence type="ECO:0000250" key="1"/>
<evidence type="ECO:0000305" key="2"/>
<accession>O33771</accession>
<reference key="1">
    <citation type="journal article" date="1997" name="J. Bacteriol.">
        <title>Evolutionary analysis of the hisCGABdFDEHI gene cluster from the archaeon Sulfolobus solfataricus P2.</title>
        <authorList>
            <person name="Charlebois R.L."/>
            <person name="Sensen C.W."/>
            <person name="Doolittle W.F."/>
            <person name="Brown J.R."/>
        </authorList>
    </citation>
    <scope>NUCLEOTIDE SEQUENCE [GENOMIC DNA]</scope>
    <source>
        <strain>ATCC 35092 / DSM 1617 / JCM 11322 / P2</strain>
    </source>
</reference>
<reference key="2">
    <citation type="journal article" date="2000" name="Genome">
        <title>Gene content and organization of a 281-kbp contig from the genome of the extremely thermophilic archaeon, Sulfolobus solfataricus P2.</title>
        <authorList>
            <person name="Charlebois R.L."/>
            <person name="Singh R.K."/>
            <person name="Chan-Weiher C.C.-Y."/>
            <person name="Allard G."/>
            <person name="Chow C."/>
            <person name="Confalonieri F."/>
            <person name="Curtis B."/>
            <person name="Duguet M."/>
            <person name="Erauso G."/>
            <person name="Faguy D."/>
            <person name="Gaasterland T."/>
            <person name="Garrett R.A."/>
            <person name="Gordon P."/>
            <person name="Jeffries A.C."/>
            <person name="Kozera C."/>
            <person name="Kushwaha N."/>
            <person name="Lafleur E."/>
            <person name="Medina N."/>
            <person name="Peng X."/>
            <person name="Penny S.L."/>
            <person name="She Q."/>
            <person name="St Jean A."/>
            <person name="van der Oost J."/>
            <person name="Young F."/>
            <person name="Zivanovic Y."/>
            <person name="Doolittle W.F."/>
            <person name="Ragan M.A."/>
            <person name="Sensen C.W."/>
        </authorList>
    </citation>
    <scope>NUCLEOTIDE SEQUENCE [LARGE SCALE GENOMIC DNA]</scope>
    <source>
        <strain>ATCC 35092 / DSM 1617 / JCM 11322 / P2</strain>
    </source>
</reference>
<reference key="3">
    <citation type="journal article" date="2001" name="Proc. Natl. Acad. Sci. U.S.A.">
        <title>The complete genome of the crenarchaeon Sulfolobus solfataricus P2.</title>
        <authorList>
            <person name="She Q."/>
            <person name="Singh R.K."/>
            <person name="Confalonieri F."/>
            <person name="Zivanovic Y."/>
            <person name="Allard G."/>
            <person name="Awayez M.J."/>
            <person name="Chan-Weiher C.C.-Y."/>
            <person name="Clausen I.G."/>
            <person name="Curtis B.A."/>
            <person name="De Moors A."/>
            <person name="Erauso G."/>
            <person name="Fletcher C."/>
            <person name="Gordon P.M.K."/>
            <person name="Heikamp-de Jong I."/>
            <person name="Jeffries A.C."/>
            <person name="Kozera C.J."/>
            <person name="Medina N."/>
            <person name="Peng X."/>
            <person name="Thi-Ngoc H.P."/>
            <person name="Redder P."/>
            <person name="Schenk M.E."/>
            <person name="Theriault C."/>
            <person name="Tolstrup N."/>
            <person name="Charlebois R.L."/>
            <person name="Doolittle W.F."/>
            <person name="Duguet M."/>
            <person name="Gaasterland T."/>
            <person name="Garrett R.A."/>
            <person name="Ragan M.A."/>
            <person name="Sensen C.W."/>
            <person name="Van der Oost J."/>
        </authorList>
    </citation>
    <scope>NUCLEOTIDE SEQUENCE [LARGE SCALE GENOMIC DNA]</scope>
    <source>
        <strain>ATCC 35092 / DSM 1617 / JCM 11322 / P2</strain>
    </source>
</reference>
<protein>
    <recommendedName>
        <fullName>ATP phosphoribosyltransferase</fullName>
        <shortName>ATP-PRT</shortName>
        <shortName>ATP-PRTase</shortName>
        <ecNumber>2.4.2.17</ecNumber>
    </recommendedName>
</protein>
<gene>
    <name type="primary">hisG</name>
    <name type="ordered locus">SSO0593</name>
    <name type="ORF">C08_057</name>
</gene>
<name>HIS1_SACS2</name>
<organism>
    <name type="scientific">Saccharolobus solfataricus (strain ATCC 35092 / DSM 1617 / JCM 11322 / P2)</name>
    <name type="common">Sulfolobus solfataricus</name>
    <dbReference type="NCBI Taxonomy" id="273057"/>
    <lineage>
        <taxon>Archaea</taxon>
        <taxon>Thermoproteota</taxon>
        <taxon>Thermoprotei</taxon>
        <taxon>Sulfolobales</taxon>
        <taxon>Sulfolobaceae</taxon>
        <taxon>Saccharolobus</taxon>
    </lineage>
</organism>